<keyword id="KW-0028">Amino-acid biosynthesis</keyword>
<keyword id="KW-0368">Histidine biosynthesis</keyword>
<keyword id="KW-0479">Metal-binding</keyword>
<keyword id="KW-0520">NAD</keyword>
<keyword id="KW-0560">Oxidoreductase</keyword>
<keyword id="KW-1185">Reference proteome</keyword>
<keyword id="KW-0862">Zinc</keyword>
<name>HISX_NITWN</name>
<reference key="1">
    <citation type="journal article" date="2006" name="Appl. Environ. Microbiol.">
        <title>Genome sequence of the chemolithoautotrophic nitrite-oxidizing bacterium Nitrobacter winogradskyi Nb-255.</title>
        <authorList>
            <person name="Starkenburg S.R."/>
            <person name="Chain P.S.G."/>
            <person name="Sayavedra-Soto L.A."/>
            <person name="Hauser L."/>
            <person name="Land M.L."/>
            <person name="Larimer F.W."/>
            <person name="Malfatti S.A."/>
            <person name="Klotz M.G."/>
            <person name="Bottomley P.J."/>
            <person name="Arp D.J."/>
            <person name="Hickey W.J."/>
        </authorList>
    </citation>
    <scope>NUCLEOTIDE SEQUENCE [LARGE SCALE GENOMIC DNA]</scope>
    <source>
        <strain>ATCC 25391 / DSM 10237 / CIP 104748 / NCIMB 11846 / Nb-255</strain>
    </source>
</reference>
<proteinExistence type="inferred from homology"/>
<feature type="chain" id="PRO_0000135803" description="Histidinol dehydrogenase">
    <location>
        <begin position="1"/>
        <end position="429"/>
    </location>
</feature>
<feature type="active site" description="Proton acceptor" evidence="1">
    <location>
        <position position="327"/>
    </location>
</feature>
<feature type="active site" description="Proton acceptor" evidence="1">
    <location>
        <position position="328"/>
    </location>
</feature>
<feature type="binding site" evidence="1">
    <location>
        <position position="130"/>
    </location>
    <ligand>
        <name>NAD(+)</name>
        <dbReference type="ChEBI" id="CHEBI:57540"/>
    </ligand>
</feature>
<feature type="binding site" evidence="1">
    <location>
        <position position="191"/>
    </location>
    <ligand>
        <name>NAD(+)</name>
        <dbReference type="ChEBI" id="CHEBI:57540"/>
    </ligand>
</feature>
<feature type="binding site" evidence="1">
    <location>
        <position position="214"/>
    </location>
    <ligand>
        <name>NAD(+)</name>
        <dbReference type="ChEBI" id="CHEBI:57540"/>
    </ligand>
</feature>
<feature type="binding site" evidence="1">
    <location>
        <position position="237"/>
    </location>
    <ligand>
        <name>substrate</name>
    </ligand>
</feature>
<feature type="binding site" evidence="1">
    <location>
        <position position="259"/>
    </location>
    <ligand>
        <name>substrate</name>
    </ligand>
</feature>
<feature type="binding site" evidence="1">
    <location>
        <position position="259"/>
    </location>
    <ligand>
        <name>Zn(2+)</name>
        <dbReference type="ChEBI" id="CHEBI:29105"/>
    </ligand>
</feature>
<feature type="binding site" evidence="1">
    <location>
        <position position="262"/>
    </location>
    <ligand>
        <name>substrate</name>
    </ligand>
</feature>
<feature type="binding site" evidence="1">
    <location>
        <position position="262"/>
    </location>
    <ligand>
        <name>Zn(2+)</name>
        <dbReference type="ChEBI" id="CHEBI:29105"/>
    </ligand>
</feature>
<feature type="binding site" evidence="1">
    <location>
        <position position="328"/>
    </location>
    <ligand>
        <name>substrate</name>
    </ligand>
</feature>
<feature type="binding site" evidence="1">
    <location>
        <position position="361"/>
    </location>
    <ligand>
        <name>substrate</name>
    </ligand>
</feature>
<feature type="binding site" evidence="1">
    <location>
        <position position="361"/>
    </location>
    <ligand>
        <name>Zn(2+)</name>
        <dbReference type="ChEBI" id="CHEBI:29105"/>
    </ligand>
</feature>
<feature type="binding site" evidence="1">
    <location>
        <position position="415"/>
    </location>
    <ligand>
        <name>substrate</name>
    </ligand>
</feature>
<feature type="binding site" evidence="1">
    <location>
        <position position="420"/>
    </location>
    <ligand>
        <name>substrate</name>
    </ligand>
</feature>
<feature type="binding site" evidence="1">
    <location>
        <position position="420"/>
    </location>
    <ligand>
        <name>Zn(2+)</name>
        <dbReference type="ChEBI" id="CHEBI:29105"/>
    </ligand>
</feature>
<evidence type="ECO:0000255" key="1">
    <source>
        <dbReference type="HAMAP-Rule" id="MF_01024"/>
    </source>
</evidence>
<evidence type="ECO:0000305" key="2"/>
<comment type="function">
    <text evidence="1">Catalyzes the sequential NAD-dependent oxidations of L-histidinol to L-histidinaldehyde and then to L-histidine.</text>
</comment>
<comment type="catalytic activity">
    <reaction evidence="1">
        <text>L-histidinol + 2 NAD(+) + H2O = L-histidine + 2 NADH + 3 H(+)</text>
        <dbReference type="Rhea" id="RHEA:20641"/>
        <dbReference type="ChEBI" id="CHEBI:15377"/>
        <dbReference type="ChEBI" id="CHEBI:15378"/>
        <dbReference type="ChEBI" id="CHEBI:57540"/>
        <dbReference type="ChEBI" id="CHEBI:57595"/>
        <dbReference type="ChEBI" id="CHEBI:57699"/>
        <dbReference type="ChEBI" id="CHEBI:57945"/>
        <dbReference type="EC" id="1.1.1.23"/>
    </reaction>
</comment>
<comment type="cofactor">
    <cofactor evidence="1">
        <name>Zn(2+)</name>
        <dbReference type="ChEBI" id="CHEBI:29105"/>
    </cofactor>
    <text evidence="1">Binds 1 zinc ion per subunit.</text>
</comment>
<comment type="pathway">
    <text evidence="1">Amino-acid biosynthesis; L-histidine biosynthesis; L-histidine from 5-phospho-alpha-D-ribose 1-diphosphate: step 9/9.</text>
</comment>
<comment type="similarity">
    <text evidence="1">Belongs to the histidinol dehydrogenase family.</text>
</comment>
<comment type="sequence caution" evidence="2">
    <conflict type="erroneous initiation">
        <sequence resource="EMBL-CDS" id="ABA03515"/>
    </conflict>
</comment>
<sequence length="429" mass="44496">MPIRIDSRNADFVPRFKAFLATKREVSADIEAATRAIVDDVAARGDAALIEATCKFDRLSVDAAGLRFTAAEIDAAVAACDAATLDALKLARDRIETFHRRQLPKDDRFIDALGVELGSRWTAIEAVGLYVPGGSAAYPSSVLMNAVPAMVAGVARVVMVVPSPAGRINPLVLAAARLGGVSEIYRVGGAQAVAALAYGTATIAPVAKIVGPGNAYVAAAKRQVFGKVGIDMIAGPSEVLVIADQTGNAGWIAADLLAQAEHDANAQSILITDSEALAADVERAVETQLATLPRAGIARASWNDFGAVILVTDLDEAVVLADSIAAEHLEIMTADPEGLAARIRNAGAIFLGPHTPEAIGDYVGGSNHVLPTARSARFSSGLGVLDFMKRTSILKCGPDQLRALGPAAMTLGKAEGLDAHARSVGVRLN</sequence>
<protein>
    <recommendedName>
        <fullName evidence="1">Histidinol dehydrogenase</fullName>
        <shortName evidence="1">HDH</shortName>
        <ecNumber evidence="1">1.1.1.23</ecNumber>
    </recommendedName>
</protein>
<organism>
    <name type="scientific">Nitrobacter winogradskyi (strain ATCC 25391 / DSM 10237 / CIP 104748 / NCIMB 11846 / Nb-255)</name>
    <dbReference type="NCBI Taxonomy" id="323098"/>
    <lineage>
        <taxon>Bacteria</taxon>
        <taxon>Pseudomonadati</taxon>
        <taxon>Pseudomonadota</taxon>
        <taxon>Alphaproteobacteria</taxon>
        <taxon>Hyphomicrobiales</taxon>
        <taxon>Nitrobacteraceae</taxon>
        <taxon>Nitrobacter</taxon>
    </lineage>
</organism>
<dbReference type="EC" id="1.1.1.23" evidence="1"/>
<dbReference type="EMBL" id="CP000115">
    <property type="protein sequence ID" value="ABA03515.1"/>
    <property type="status" value="ALT_INIT"/>
    <property type="molecule type" value="Genomic_DNA"/>
</dbReference>
<dbReference type="RefSeq" id="WP_041344641.1">
    <property type="nucleotide sequence ID" value="NC_007406.1"/>
</dbReference>
<dbReference type="SMR" id="Q3SW26"/>
<dbReference type="STRING" id="323098.Nwi_0247"/>
<dbReference type="KEGG" id="nwi:Nwi_0247"/>
<dbReference type="eggNOG" id="COG0141">
    <property type="taxonomic scope" value="Bacteria"/>
</dbReference>
<dbReference type="HOGENOM" id="CLU_006732_3_3_5"/>
<dbReference type="OrthoDB" id="9805269at2"/>
<dbReference type="UniPathway" id="UPA00031">
    <property type="reaction ID" value="UER00014"/>
</dbReference>
<dbReference type="Proteomes" id="UP000002531">
    <property type="component" value="Chromosome"/>
</dbReference>
<dbReference type="GO" id="GO:0005829">
    <property type="term" value="C:cytosol"/>
    <property type="evidence" value="ECO:0007669"/>
    <property type="project" value="TreeGrafter"/>
</dbReference>
<dbReference type="GO" id="GO:0004399">
    <property type="term" value="F:histidinol dehydrogenase activity"/>
    <property type="evidence" value="ECO:0007669"/>
    <property type="project" value="UniProtKB-UniRule"/>
</dbReference>
<dbReference type="GO" id="GO:0051287">
    <property type="term" value="F:NAD binding"/>
    <property type="evidence" value="ECO:0007669"/>
    <property type="project" value="InterPro"/>
</dbReference>
<dbReference type="GO" id="GO:0008270">
    <property type="term" value="F:zinc ion binding"/>
    <property type="evidence" value="ECO:0007669"/>
    <property type="project" value="UniProtKB-UniRule"/>
</dbReference>
<dbReference type="GO" id="GO:0000105">
    <property type="term" value="P:L-histidine biosynthetic process"/>
    <property type="evidence" value="ECO:0007669"/>
    <property type="project" value="UniProtKB-UniRule"/>
</dbReference>
<dbReference type="CDD" id="cd06572">
    <property type="entry name" value="Histidinol_dh"/>
    <property type="match status" value="1"/>
</dbReference>
<dbReference type="FunFam" id="3.40.50.1980:FF:000001">
    <property type="entry name" value="Histidinol dehydrogenase"/>
    <property type="match status" value="1"/>
</dbReference>
<dbReference type="FunFam" id="3.40.50.1980:FF:000026">
    <property type="entry name" value="Histidinol dehydrogenase"/>
    <property type="match status" value="1"/>
</dbReference>
<dbReference type="FunFam" id="1.20.5.1300:FF:000002">
    <property type="entry name" value="Histidinol dehydrogenase, chloroplastic"/>
    <property type="match status" value="1"/>
</dbReference>
<dbReference type="Gene3D" id="1.20.5.1300">
    <property type="match status" value="1"/>
</dbReference>
<dbReference type="Gene3D" id="3.40.50.1980">
    <property type="entry name" value="Nitrogenase molybdenum iron protein domain"/>
    <property type="match status" value="2"/>
</dbReference>
<dbReference type="HAMAP" id="MF_01024">
    <property type="entry name" value="HisD"/>
    <property type="match status" value="1"/>
</dbReference>
<dbReference type="InterPro" id="IPR016161">
    <property type="entry name" value="Ald_DH/histidinol_DH"/>
</dbReference>
<dbReference type="InterPro" id="IPR001692">
    <property type="entry name" value="Histidinol_DH_CS"/>
</dbReference>
<dbReference type="InterPro" id="IPR022695">
    <property type="entry name" value="Histidinol_DH_monofunct"/>
</dbReference>
<dbReference type="InterPro" id="IPR012131">
    <property type="entry name" value="Hstdl_DH"/>
</dbReference>
<dbReference type="NCBIfam" id="TIGR00069">
    <property type="entry name" value="hisD"/>
    <property type="match status" value="1"/>
</dbReference>
<dbReference type="PANTHER" id="PTHR21256:SF2">
    <property type="entry name" value="HISTIDINE BIOSYNTHESIS TRIFUNCTIONAL PROTEIN"/>
    <property type="match status" value="1"/>
</dbReference>
<dbReference type="PANTHER" id="PTHR21256">
    <property type="entry name" value="HISTIDINOL DEHYDROGENASE HDH"/>
    <property type="match status" value="1"/>
</dbReference>
<dbReference type="Pfam" id="PF00815">
    <property type="entry name" value="Histidinol_dh"/>
    <property type="match status" value="1"/>
</dbReference>
<dbReference type="PIRSF" id="PIRSF000099">
    <property type="entry name" value="Histidinol_dh"/>
    <property type="match status" value="1"/>
</dbReference>
<dbReference type="PRINTS" id="PR00083">
    <property type="entry name" value="HOLDHDRGNASE"/>
</dbReference>
<dbReference type="SUPFAM" id="SSF53720">
    <property type="entry name" value="ALDH-like"/>
    <property type="match status" value="1"/>
</dbReference>
<dbReference type="PROSITE" id="PS00611">
    <property type="entry name" value="HISOL_DEHYDROGENASE"/>
    <property type="match status" value="1"/>
</dbReference>
<gene>
    <name evidence="1" type="primary">hisD</name>
    <name type="ordered locus">Nwi_0247</name>
</gene>
<accession>Q3SW26</accession>